<gene>
    <name evidence="1" type="primary">ftsQ</name>
    <name type="ordered locus">MLBr00916</name>
</gene>
<evidence type="ECO:0000255" key="1">
    <source>
        <dbReference type="HAMAP-Rule" id="MF_00911"/>
    </source>
</evidence>
<evidence type="ECO:0000255" key="2">
    <source>
        <dbReference type="PROSITE-ProRule" id="PRU01115"/>
    </source>
</evidence>
<sequence>MTETDEGAPVNHSATMWAVVGVPPVCGGQPGDSGVVAGTSRALVDAAIIAPVTTLTRDEPAQYDRYEFEGPRRRARRERAERRAAQACAIAIEEARREAKHRIHRQMSSEANSPKPVARGVVRGLKTLFATVMFSIAGFGLGLALYVTPAMSVRNIVVTGIETVTREEVLDAAGVQLGTPLLQINTNQVADQVAAIRRVASARAQRQYPSALRITIVERVPVVVKDFPDGPHLFDCDGVDFATAPPPPALPYIDVGHPGPIDPATKAALVVLLALRPEVVSQVARIAAPSVSSITLILTDGRAVIWGSTDRAEEKAEKLAALLTQPGRTYDVSSPDLPTVK</sequence>
<accession>B8ZQQ2</accession>
<proteinExistence type="inferred from homology"/>
<feature type="chain" id="PRO_0000414678" description="Cell division protein FtsQ">
    <location>
        <begin position="1"/>
        <end position="341"/>
    </location>
</feature>
<feature type="topological domain" description="Cytoplasmic" evidence="1">
    <location>
        <begin position="1"/>
        <end position="126"/>
    </location>
</feature>
<feature type="transmembrane region" description="Helical" evidence="1">
    <location>
        <begin position="127"/>
        <end position="147"/>
    </location>
</feature>
<feature type="topological domain" description="Extracellular" evidence="1">
    <location>
        <begin position="148"/>
        <end position="341"/>
    </location>
</feature>
<feature type="domain" description="POTRA" evidence="2">
    <location>
        <begin position="151"/>
        <end position="219"/>
    </location>
</feature>
<reference key="1">
    <citation type="journal article" date="2009" name="Nat. Genet.">
        <title>Comparative genomic and phylogeographic analysis of Mycobacterium leprae.</title>
        <authorList>
            <person name="Monot M."/>
            <person name="Honore N."/>
            <person name="Garnier T."/>
            <person name="Zidane N."/>
            <person name="Sherafi D."/>
            <person name="Paniz-Mondolfi A."/>
            <person name="Matsuoka M."/>
            <person name="Taylor G.M."/>
            <person name="Donoghue H.D."/>
            <person name="Bouwman A."/>
            <person name="Mays S."/>
            <person name="Watson C."/>
            <person name="Lockwood D."/>
            <person name="Khamispour A."/>
            <person name="Dowlati Y."/>
            <person name="Jianping S."/>
            <person name="Rea T.H."/>
            <person name="Vera-Cabrera L."/>
            <person name="Stefani M.M."/>
            <person name="Banu S."/>
            <person name="Macdonald M."/>
            <person name="Sapkota B.R."/>
            <person name="Spencer J.S."/>
            <person name="Thomas J."/>
            <person name="Harshman K."/>
            <person name="Singh P."/>
            <person name="Busso P."/>
            <person name="Gattiker A."/>
            <person name="Rougemont J."/>
            <person name="Brennan P.J."/>
            <person name="Cole S.T."/>
        </authorList>
    </citation>
    <scope>NUCLEOTIDE SEQUENCE [LARGE SCALE GENOMIC DNA]</scope>
    <source>
        <strain>Br4923</strain>
    </source>
</reference>
<protein>
    <recommendedName>
        <fullName evidence="1">Cell division protein FtsQ</fullName>
    </recommendedName>
</protein>
<comment type="function">
    <text evidence="1">Essential cell division protein.</text>
</comment>
<comment type="subcellular location">
    <subcellularLocation>
        <location evidence="1">Cell membrane</location>
        <topology evidence="1">Single-pass type II membrane protein</topology>
    </subcellularLocation>
    <text evidence="1">Localizes to the division septum.</text>
</comment>
<comment type="similarity">
    <text evidence="1">Belongs to the FtsQ/DivIB family. FtsQ subfamily.</text>
</comment>
<organism>
    <name type="scientific">Mycobacterium leprae (strain Br4923)</name>
    <dbReference type="NCBI Taxonomy" id="561304"/>
    <lineage>
        <taxon>Bacteria</taxon>
        <taxon>Bacillati</taxon>
        <taxon>Actinomycetota</taxon>
        <taxon>Actinomycetes</taxon>
        <taxon>Mycobacteriales</taxon>
        <taxon>Mycobacteriaceae</taxon>
        <taxon>Mycobacterium</taxon>
    </lineage>
</organism>
<keyword id="KW-0131">Cell cycle</keyword>
<keyword id="KW-0132">Cell division</keyword>
<keyword id="KW-1003">Cell membrane</keyword>
<keyword id="KW-0472">Membrane</keyword>
<keyword id="KW-0812">Transmembrane</keyword>
<keyword id="KW-1133">Transmembrane helix</keyword>
<dbReference type="EMBL" id="FM211192">
    <property type="protein sequence ID" value="CAR71011.1"/>
    <property type="molecule type" value="Genomic_DNA"/>
</dbReference>
<dbReference type="SMR" id="B8ZQQ2"/>
<dbReference type="KEGG" id="mlb:MLBr00916"/>
<dbReference type="HOGENOM" id="CLU_047677_1_2_11"/>
<dbReference type="Proteomes" id="UP000006900">
    <property type="component" value="Chromosome"/>
</dbReference>
<dbReference type="GO" id="GO:0032153">
    <property type="term" value="C:cell division site"/>
    <property type="evidence" value="ECO:0007669"/>
    <property type="project" value="UniProtKB-UniRule"/>
</dbReference>
<dbReference type="GO" id="GO:0005886">
    <property type="term" value="C:plasma membrane"/>
    <property type="evidence" value="ECO:0007669"/>
    <property type="project" value="UniProtKB-SubCell"/>
</dbReference>
<dbReference type="GO" id="GO:0090529">
    <property type="term" value="P:cell septum assembly"/>
    <property type="evidence" value="ECO:0007669"/>
    <property type="project" value="InterPro"/>
</dbReference>
<dbReference type="GO" id="GO:0043093">
    <property type="term" value="P:FtsZ-dependent cytokinesis"/>
    <property type="evidence" value="ECO:0007669"/>
    <property type="project" value="UniProtKB-UniRule"/>
</dbReference>
<dbReference type="Gene3D" id="3.10.20.310">
    <property type="entry name" value="membrane protein fhac"/>
    <property type="match status" value="1"/>
</dbReference>
<dbReference type="HAMAP" id="MF_00911">
    <property type="entry name" value="FtsQ_subfam"/>
    <property type="match status" value="1"/>
</dbReference>
<dbReference type="InterPro" id="IPR005548">
    <property type="entry name" value="Cell_div_FtsQ/DivIB_C"/>
</dbReference>
<dbReference type="InterPro" id="IPR026579">
    <property type="entry name" value="FtsQ"/>
</dbReference>
<dbReference type="InterPro" id="IPR050487">
    <property type="entry name" value="FtsQ_DivIB"/>
</dbReference>
<dbReference type="InterPro" id="IPR034746">
    <property type="entry name" value="POTRA"/>
</dbReference>
<dbReference type="InterPro" id="IPR013685">
    <property type="entry name" value="POTRA_FtsQ_type"/>
</dbReference>
<dbReference type="PANTHER" id="PTHR37820">
    <property type="entry name" value="CELL DIVISION PROTEIN DIVIB"/>
    <property type="match status" value="1"/>
</dbReference>
<dbReference type="PANTHER" id="PTHR37820:SF1">
    <property type="entry name" value="CELL DIVISION PROTEIN FTSQ"/>
    <property type="match status" value="1"/>
</dbReference>
<dbReference type="Pfam" id="PF03799">
    <property type="entry name" value="FtsQ_DivIB_C"/>
    <property type="match status" value="1"/>
</dbReference>
<dbReference type="Pfam" id="PF08478">
    <property type="entry name" value="POTRA_1"/>
    <property type="match status" value="1"/>
</dbReference>
<dbReference type="PROSITE" id="PS51779">
    <property type="entry name" value="POTRA"/>
    <property type="match status" value="1"/>
</dbReference>
<name>FTSQ_MYCLB</name>